<gene>
    <name type="primary">CLEC9A</name>
    <name type="ORF">UNQ9341/PRO34046</name>
</gene>
<organism>
    <name type="scientific">Homo sapiens</name>
    <name type="common">Human</name>
    <dbReference type="NCBI Taxonomy" id="9606"/>
    <lineage>
        <taxon>Eukaryota</taxon>
        <taxon>Metazoa</taxon>
        <taxon>Chordata</taxon>
        <taxon>Craniata</taxon>
        <taxon>Vertebrata</taxon>
        <taxon>Euteleostomi</taxon>
        <taxon>Mammalia</taxon>
        <taxon>Eutheria</taxon>
        <taxon>Euarchontoglires</taxon>
        <taxon>Primates</taxon>
        <taxon>Haplorrhini</taxon>
        <taxon>Catarrhini</taxon>
        <taxon>Hominidae</taxon>
        <taxon>Homo</taxon>
    </lineage>
</organism>
<dbReference type="EMBL" id="EU339276">
    <property type="protein sequence ID" value="ABZ04557.1"/>
    <property type="molecule type" value="mRNA"/>
</dbReference>
<dbReference type="EMBL" id="AY358265">
    <property type="protein sequence ID" value="AAQ88632.1"/>
    <property type="molecule type" value="mRNA"/>
</dbReference>
<dbReference type="CCDS" id="CCDS8611.1"/>
<dbReference type="RefSeq" id="NP_997228.1">
    <property type="nucleotide sequence ID" value="NM_207345.4"/>
</dbReference>
<dbReference type="PDB" id="3VPP">
    <property type="method" value="X-ray"/>
    <property type="resolution" value="1.64 A"/>
    <property type="chains" value="A/B=110-241"/>
</dbReference>
<dbReference type="PDBsum" id="3VPP"/>
<dbReference type="SMR" id="Q6UXN8"/>
<dbReference type="BioGRID" id="129557">
    <property type="interactions" value="1"/>
</dbReference>
<dbReference type="FunCoup" id="Q6UXN8">
    <property type="interactions" value="19"/>
</dbReference>
<dbReference type="STRING" id="9606.ENSP00000348074"/>
<dbReference type="UniLectin" id="Q6UXN8"/>
<dbReference type="GlyCosmos" id="Q6UXN8">
    <property type="glycosylation" value="2 sites, No reported glycans"/>
</dbReference>
<dbReference type="GlyGen" id="Q6UXN8">
    <property type="glycosylation" value="2 sites"/>
</dbReference>
<dbReference type="iPTMnet" id="Q6UXN8"/>
<dbReference type="PhosphoSitePlus" id="Q6UXN8"/>
<dbReference type="BioMuta" id="CLEC9A"/>
<dbReference type="DMDM" id="73917794"/>
<dbReference type="MassIVE" id="Q6UXN8"/>
<dbReference type="PaxDb" id="9606-ENSP00000348074"/>
<dbReference type="PeptideAtlas" id="Q6UXN8"/>
<dbReference type="ProteomicsDB" id="67640"/>
<dbReference type="ABCD" id="Q6UXN8">
    <property type="antibodies" value="59 sequenced antibodies"/>
</dbReference>
<dbReference type="Antibodypedia" id="23221">
    <property type="antibodies" value="464 antibodies from 30 providers"/>
</dbReference>
<dbReference type="DNASU" id="283420"/>
<dbReference type="Ensembl" id="ENST00000355819.6">
    <property type="protein sequence ID" value="ENSP00000348074.1"/>
    <property type="gene ID" value="ENSG00000197992.7"/>
</dbReference>
<dbReference type="GeneID" id="283420"/>
<dbReference type="KEGG" id="hsa:283420"/>
<dbReference type="MANE-Select" id="ENST00000355819.6">
    <property type="protein sequence ID" value="ENSP00000348074.1"/>
    <property type="RefSeq nucleotide sequence ID" value="NM_207345.4"/>
    <property type="RefSeq protein sequence ID" value="NP_997228.1"/>
</dbReference>
<dbReference type="UCSC" id="uc001qxa.4">
    <property type="organism name" value="human"/>
</dbReference>
<dbReference type="AGR" id="HGNC:26705"/>
<dbReference type="CTD" id="283420"/>
<dbReference type="DisGeNET" id="283420"/>
<dbReference type="GeneCards" id="CLEC9A"/>
<dbReference type="HGNC" id="HGNC:26705">
    <property type="gene designation" value="CLEC9A"/>
</dbReference>
<dbReference type="HPA" id="ENSG00000197992">
    <property type="expression patterns" value="Tissue enhanced (brain, lymphoid tissue)"/>
</dbReference>
<dbReference type="MIM" id="612252">
    <property type="type" value="gene"/>
</dbReference>
<dbReference type="neXtProt" id="NX_Q6UXN8"/>
<dbReference type="OpenTargets" id="ENSG00000197992"/>
<dbReference type="PharmGKB" id="PA142672093"/>
<dbReference type="VEuPathDB" id="HostDB:ENSG00000197992"/>
<dbReference type="eggNOG" id="KOG4297">
    <property type="taxonomic scope" value="Eukaryota"/>
</dbReference>
<dbReference type="GeneTree" id="ENSGT00940000161796"/>
<dbReference type="HOGENOM" id="CLU_049894_9_0_1"/>
<dbReference type="InParanoid" id="Q6UXN8"/>
<dbReference type="OMA" id="WDSPAPN"/>
<dbReference type="OrthoDB" id="6337382at2759"/>
<dbReference type="PAN-GO" id="Q6UXN8">
    <property type="GO annotations" value="2 GO annotations based on evolutionary models"/>
</dbReference>
<dbReference type="PhylomeDB" id="Q6UXN8"/>
<dbReference type="TreeFam" id="TF336674"/>
<dbReference type="PathwayCommons" id="Q6UXN8"/>
<dbReference type="SignaLink" id="Q6UXN8"/>
<dbReference type="BioGRID-ORCS" id="283420">
    <property type="hits" value="11 hits in 1141 CRISPR screens"/>
</dbReference>
<dbReference type="ChiTaRS" id="CLEC9A">
    <property type="organism name" value="human"/>
</dbReference>
<dbReference type="EvolutionaryTrace" id="Q6UXN8"/>
<dbReference type="GenomeRNAi" id="283420"/>
<dbReference type="Pharos" id="Q6UXN8">
    <property type="development level" value="Tbio"/>
</dbReference>
<dbReference type="PRO" id="PR:Q6UXN8"/>
<dbReference type="Proteomes" id="UP000005640">
    <property type="component" value="Chromosome 12"/>
</dbReference>
<dbReference type="RNAct" id="Q6UXN8">
    <property type="molecule type" value="protein"/>
</dbReference>
<dbReference type="Bgee" id="ENSG00000197992">
    <property type="expression patterns" value="Expressed in male germ line stem cell (sensu Vertebrata) in testis and 97 other cell types or tissues"/>
</dbReference>
<dbReference type="GO" id="GO:0009986">
    <property type="term" value="C:cell surface"/>
    <property type="evidence" value="ECO:0000314"/>
    <property type="project" value="UniProtKB"/>
</dbReference>
<dbReference type="GO" id="GO:0016020">
    <property type="term" value="C:membrane"/>
    <property type="evidence" value="ECO:0007669"/>
    <property type="project" value="UniProtKB-SubCell"/>
</dbReference>
<dbReference type="GO" id="GO:0030246">
    <property type="term" value="F:carbohydrate binding"/>
    <property type="evidence" value="ECO:0007669"/>
    <property type="project" value="UniProtKB-KW"/>
</dbReference>
<dbReference type="GO" id="GO:0001819">
    <property type="term" value="P:positive regulation of cytokine production"/>
    <property type="evidence" value="ECO:0000314"/>
    <property type="project" value="UniProtKB"/>
</dbReference>
<dbReference type="GO" id="GO:0006898">
    <property type="term" value="P:receptor-mediated endocytosis"/>
    <property type="evidence" value="ECO:0000314"/>
    <property type="project" value="UniProtKB"/>
</dbReference>
<dbReference type="CDD" id="cd03593">
    <property type="entry name" value="CLECT_NK_receptors_like"/>
    <property type="match status" value="1"/>
</dbReference>
<dbReference type="FunFam" id="3.10.100.10:FF:000075">
    <property type="entry name" value="C-type lectin domain family 9 member A"/>
    <property type="match status" value="1"/>
</dbReference>
<dbReference type="Gene3D" id="3.10.100.10">
    <property type="entry name" value="Mannose-Binding Protein A, subunit A"/>
    <property type="match status" value="1"/>
</dbReference>
<dbReference type="InterPro" id="IPR001304">
    <property type="entry name" value="C-type_lectin-like"/>
</dbReference>
<dbReference type="InterPro" id="IPR016186">
    <property type="entry name" value="C-type_lectin-like/link_sf"/>
</dbReference>
<dbReference type="InterPro" id="IPR018378">
    <property type="entry name" value="C-type_lectin_CS"/>
</dbReference>
<dbReference type="InterPro" id="IPR043315">
    <property type="entry name" value="CLEC9A"/>
</dbReference>
<dbReference type="InterPro" id="IPR016187">
    <property type="entry name" value="CTDL_fold"/>
</dbReference>
<dbReference type="InterPro" id="IPR033992">
    <property type="entry name" value="NKR-like_CTLD"/>
</dbReference>
<dbReference type="PANTHER" id="PTHR47727">
    <property type="entry name" value="C-TYPE LECTIN DOMAIN FAMILY 9 MEMBER A"/>
    <property type="match status" value="1"/>
</dbReference>
<dbReference type="PANTHER" id="PTHR47727:SF1">
    <property type="entry name" value="C-TYPE LECTIN DOMAIN FAMILY 9 MEMBER A"/>
    <property type="match status" value="1"/>
</dbReference>
<dbReference type="Pfam" id="PF00059">
    <property type="entry name" value="Lectin_C"/>
    <property type="match status" value="1"/>
</dbReference>
<dbReference type="SMART" id="SM00034">
    <property type="entry name" value="CLECT"/>
    <property type="match status" value="1"/>
</dbReference>
<dbReference type="SUPFAM" id="SSF56436">
    <property type="entry name" value="C-type lectin-like"/>
    <property type="match status" value="1"/>
</dbReference>
<dbReference type="PROSITE" id="PS00615">
    <property type="entry name" value="C_TYPE_LECTIN_1"/>
    <property type="match status" value="1"/>
</dbReference>
<dbReference type="PROSITE" id="PS50041">
    <property type="entry name" value="C_TYPE_LECTIN_2"/>
    <property type="match status" value="1"/>
</dbReference>
<keyword id="KW-0002">3D-structure</keyword>
<keyword id="KW-1015">Disulfide bond</keyword>
<keyword id="KW-0254">Endocytosis</keyword>
<keyword id="KW-0325">Glycoprotein</keyword>
<keyword id="KW-0430">Lectin</keyword>
<keyword id="KW-0472">Membrane</keyword>
<keyword id="KW-1267">Proteomics identification</keyword>
<keyword id="KW-0675">Receptor</keyword>
<keyword id="KW-1185">Reference proteome</keyword>
<keyword id="KW-0735">Signal-anchor</keyword>
<keyword id="KW-0812">Transmembrane</keyword>
<keyword id="KW-1133">Transmembrane helix</keyword>
<proteinExistence type="evidence at protein level"/>
<accession>Q6UXN8</accession>
<accession>B0ZBM2</accession>
<reference key="1">
    <citation type="journal article" date="2008" name="J. Biol. Chem.">
        <title>CLEC9A is a novel activation C-type lectin-like receptor expressed on BDCA3+ dendritic cells and a subset of monocytes.</title>
        <authorList>
            <person name="Huysamen C."/>
            <person name="Willment J.A."/>
            <person name="Dennehy K.M."/>
            <person name="Brown G.D."/>
        </authorList>
    </citation>
    <scope>NUCLEOTIDE SEQUENCE [MRNA]</scope>
    <scope>SUBUNIT</scope>
    <scope>PHOSPHORYLATION</scope>
    <scope>SUBCELLULAR LOCATION</scope>
    <scope>TISSUE SPECIFICITY</scope>
    <scope>GLYCOSYLATION</scope>
</reference>
<reference key="2">
    <citation type="journal article" date="2003" name="Genome Res.">
        <title>The secreted protein discovery initiative (SPDI), a large-scale effort to identify novel human secreted and transmembrane proteins: a bioinformatics assessment.</title>
        <authorList>
            <person name="Clark H.F."/>
            <person name="Gurney A.L."/>
            <person name="Abaya E."/>
            <person name="Baker K."/>
            <person name="Baldwin D.T."/>
            <person name="Brush J."/>
            <person name="Chen J."/>
            <person name="Chow B."/>
            <person name="Chui C."/>
            <person name="Crowley C."/>
            <person name="Currell B."/>
            <person name="Deuel B."/>
            <person name="Dowd P."/>
            <person name="Eaton D."/>
            <person name="Foster J.S."/>
            <person name="Grimaldi C."/>
            <person name="Gu Q."/>
            <person name="Hass P.E."/>
            <person name="Heldens S."/>
            <person name="Huang A."/>
            <person name="Kim H.S."/>
            <person name="Klimowski L."/>
            <person name="Jin Y."/>
            <person name="Johnson S."/>
            <person name="Lee J."/>
            <person name="Lewis L."/>
            <person name="Liao D."/>
            <person name="Mark M.R."/>
            <person name="Robbie E."/>
            <person name="Sanchez C."/>
            <person name="Schoenfeld J."/>
            <person name="Seshagiri S."/>
            <person name="Simmons L."/>
            <person name="Singh J."/>
            <person name="Smith V."/>
            <person name="Stinson J."/>
            <person name="Vagts A."/>
            <person name="Vandlen R.L."/>
            <person name="Watanabe C."/>
            <person name="Wieand D."/>
            <person name="Woods K."/>
            <person name="Xie M.-H."/>
            <person name="Yansura D.G."/>
            <person name="Yi S."/>
            <person name="Yu G."/>
            <person name="Yuan J."/>
            <person name="Zhang M."/>
            <person name="Zhang Z."/>
            <person name="Goddard A.D."/>
            <person name="Wood W.I."/>
            <person name="Godowski P.J."/>
            <person name="Gray A.M."/>
        </authorList>
    </citation>
    <scope>NUCLEOTIDE SEQUENCE [LARGE SCALE MRNA]</scope>
</reference>
<reference key="3">
    <citation type="journal article" date="2008" name="J. Clin. Invest.">
        <title>Tumor therapy in mice via antigen targeting to a novel, DC-restricted C-type lectin.</title>
        <authorList>
            <person name="Sancho D."/>
            <person name="Mourao-Sa D."/>
            <person name="Joffre O.P."/>
            <person name="Schulz O."/>
            <person name="Rogers N.C."/>
            <person name="Pennington D.J."/>
            <person name="Carlyle J.R."/>
            <person name="Reis e Sousa C."/>
        </authorList>
    </citation>
    <scope>TISSUE SPECIFICITY</scope>
    <scope>FUNCTION</scope>
</reference>
<reference key="4">
    <citation type="journal article" date="2012" name="Immunity">
        <title>The dendritic cell receptor Clec9A binds damaged cells via exposed actin filaments.</title>
        <authorList>
            <person name="Zhang J.G."/>
            <person name="Czabotar P.E."/>
            <person name="Policheni A.N."/>
            <person name="Caminschi I."/>
            <person name="Wan S.S."/>
            <person name="Kitsoulis S."/>
            <person name="Tullett K.M."/>
            <person name="Robin A.Y."/>
            <person name="Brammananth R."/>
            <person name="van Delft M.F."/>
            <person name="Lu J."/>
            <person name="O'Reilly L.A."/>
            <person name="Josefsson E.C."/>
            <person name="Kile B.T."/>
            <person name="Chin W.J."/>
            <person name="Mintern J.D."/>
            <person name="Olshina M.A."/>
            <person name="Wong W."/>
            <person name="Baum J."/>
            <person name="Wright M.D."/>
            <person name="Huang D.C."/>
            <person name="Mohandas N."/>
            <person name="Coppel R.L."/>
            <person name="Colman P.M."/>
            <person name="Nicola N.A."/>
            <person name="Shortman K."/>
            <person name="Lahoud M.H."/>
        </authorList>
    </citation>
    <scope>X-RAY CRYSTALLOGRAPHY (1.64 ANGSTROMS) OF 110-241</scope>
    <scope>FUNCTION</scope>
    <scope>DISULFIDE BONDS</scope>
    <scope>SUBUNIT</scope>
    <scope>MUTAGENESIS OF TRP-131 AND TRP-227</scope>
</reference>
<sequence length="241" mass="27324">MHEEEIYTSLQWDSPAPDTYQKCLSSNKCSGACCLVMVISCVFCMGLLTASIFLGVKLLQVSTIAMQQQEKLIQQERALLNFTEWKRSCALQMKYCQAFMQNSLSSAHNSSPCPNNWIQNRESCYYVSEIWSIWHTSQENCLKEGSTLLQIESKEEMDFITGSLRKIKGSYDYWVGLSQDGHSGRWLWQDGSSPSPGLLPAERSQSANQVCGYVKSNSLLSSNCSTWKYFICEKYALRSSV</sequence>
<protein>
    <recommendedName>
        <fullName>C-type lectin domain family 9 member A</fullName>
    </recommendedName>
    <cdAntigenName>CD370</cdAntigenName>
</protein>
<evidence type="ECO:0000255" key="1"/>
<evidence type="ECO:0000255" key="2">
    <source>
        <dbReference type="PROSITE-ProRule" id="PRU00040"/>
    </source>
</evidence>
<evidence type="ECO:0000269" key="3">
    <source>
    </source>
</evidence>
<evidence type="ECO:0000269" key="4">
    <source>
    </source>
</evidence>
<evidence type="ECO:0000269" key="5">
    <source>
    </source>
</evidence>
<evidence type="ECO:0007829" key="6">
    <source>
        <dbReference type="PDB" id="3VPP"/>
    </source>
</evidence>
<feature type="chain" id="PRO_0000046637" description="C-type lectin domain family 9 member A">
    <location>
        <begin position="1"/>
        <end position="241"/>
    </location>
</feature>
<feature type="topological domain" description="Cytoplasmic" evidence="1">
    <location>
        <begin position="1"/>
        <end position="35"/>
    </location>
</feature>
<feature type="transmembrane region" description="Helical; Signal-anchor for type II membrane protein" evidence="1">
    <location>
        <begin position="36"/>
        <end position="56"/>
    </location>
</feature>
<feature type="topological domain" description="Extracellular" evidence="1">
    <location>
        <begin position="57"/>
        <end position="241"/>
    </location>
</feature>
<feature type="domain" description="C-type lectin" evidence="2">
    <location>
        <begin position="120"/>
        <end position="233"/>
    </location>
</feature>
<feature type="short sequence motif" description="ITAM-like">
    <location>
        <begin position="5"/>
        <end position="10"/>
    </location>
</feature>
<feature type="glycosylation site" description="N-linked (GlcNAc...) asparagine" evidence="1">
    <location>
        <position position="81"/>
    </location>
</feature>
<feature type="glycosylation site" description="N-linked (GlcNAc...) asparagine" evidence="1">
    <location>
        <position position="223"/>
    </location>
</feature>
<feature type="disulfide bond" evidence="2 5">
    <location>
        <begin position="113"/>
        <end position="124"/>
    </location>
</feature>
<feature type="disulfide bond" evidence="2 5">
    <location>
        <begin position="141"/>
        <end position="232"/>
    </location>
</feature>
<feature type="disulfide bond" evidence="2 5">
    <location>
        <begin position="211"/>
        <end position="224"/>
    </location>
</feature>
<feature type="sequence variant" id="VAR_050112" description="In dbSNP:rs11831360.">
    <original>A</original>
    <variation>G</variation>
    <location>
        <position position="107"/>
    </location>
</feature>
<feature type="mutagenesis site" description="Abolishes binding to damaged cells; when associated with A-227." evidence="5">
    <original>W</original>
    <variation>A</variation>
    <location>
        <position position="131"/>
    </location>
</feature>
<feature type="mutagenesis site" description="Abolishes binding to damaged cells; when associated with A-131." evidence="5">
    <original>W</original>
    <variation>A</variation>
    <location>
        <position position="227"/>
    </location>
</feature>
<feature type="strand" evidence="6">
    <location>
        <begin position="118"/>
        <end position="120"/>
    </location>
</feature>
<feature type="strand" evidence="6">
    <location>
        <begin position="123"/>
        <end position="127"/>
    </location>
</feature>
<feature type="helix" evidence="6">
    <location>
        <begin position="134"/>
        <end position="143"/>
    </location>
</feature>
<feature type="helix" evidence="6">
    <location>
        <begin position="154"/>
        <end position="164"/>
    </location>
</feature>
<feature type="strand" evidence="6">
    <location>
        <begin position="167"/>
        <end position="169"/>
    </location>
</feature>
<feature type="strand" evidence="6">
    <location>
        <begin position="172"/>
        <end position="179"/>
    </location>
</feature>
<feature type="turn" evidence="6">
    <location>
        <begin position="181"/>
        <end position="183"/>
    </location>
</feature>
<feature type="strand" evidence="6">
    <location>
        <begin position="186"/>
        <end position="188"/>
    </location>
</feature>
<feature type="strand" evidence="6">
    <location>
        <begin position="210"/>
        <end position="215"/>
    </location>
</feature>
<feature type="strand" evidence="6">
    <location>
        <begin position="218"/>
        <end position="226"/>
    </location>
</feature>
<feature type="strand" evidence="6">
    <location>
        <begin position="228"/>
        <end position="235"/>
    </location>
</feature>
<name>CLC9A_HUMAN</name>
<comment type="function">
    <text evidence="4 5">Functions as an endocytic receptor on a small subset of myeloid cells specialized for the uptake and processing of material from dead cells. Recognizes filamentous form of actin in association with particular actin-binding domains of cytoskeletal proteins, including spectrin, exposed when cell membranes are damaged, and mediate the cross-presentation of dead-cell associated antigens in a Syk-dependent manner.</text>
</comment>
<comment type="subunit">
    <text evidence="3 5">Homodimer.</text>
</comment>
<comment type="subcellular location">
    <subcellularLocation>
        <location evidence="3">Membrane</location>
        <topology evidence="3">Single-pass type II membrane protein</topology>
    </subcellularLocation>
</comment>
<comment type="tissue specificity">
    <text evidence="3 4">In peripheral blood highly restricted on the surface of BDCA31(+) dendritic cells and on a small subset of CD14(+) and CD16(-) monocytes.</text>
</comment>
<comment type="PTM">
    <text evidence="3">N-glycosylated.</text>
</comment>